<gene>
    <name type="primary">RIX1</name>
    <name type="ordered locus">CAALFM_C405230CA</name>
    <name type="ORF">CaO19.14152</name>
    <name type="ORF">CaO19.6862</name>
</gene>
<proteinExistence type="inferred from homology"/>
<dbReference type="EMBL" id="CP017626">
    <property type="protein sequence ID" value="AOW29262.1"/>
    <property type="molecule type" value="Genomic_DNA"/>
</dbReference>
<dbReference type="RefSeq" id="XP_712250.2">
    <property type="nucleotide sequence ID" value="XM_707157.2"/>
</dbReference>
<dbReference type="SMR" id="Q59RA0"/>
<dbReference type="FunCoup" id="Q59RA0">
    <property type="interactions" value="346"/>
</dbReference>
<dbReference type="STRING" id="237561.Q59RA0"/>
<dbReference type="EnsemblFungi" id="C4_05230C_A-T">
    <property type="protein sequence ID" value="C4_05230C_A-T-p1"/>
    <property type="gene ID" value="C4_05230C_A"/>
</dbReference>
<dbReference type="GeneID" id="3646156"/>
<dbReference type="KEGG" id="cal:CAALFM_C405230CA"/>
<dbReference type="CGD" id="CAL0000185245">
    <property type="gene designation" value="orf19.14152"/>
</dbReference>
<dbReference type="VEuPathDB" id="FungiDB:C4_05230C_A"/>
<dbReference type="eggNOG" id="ENOG502R65X">
    <property type="taxonomic scope" value="Eukaryota"/>
</dbReference>
<dbReference type="HOGENOM" id="CLU_020084_1_0_1"/>
<dbReference type="InParanoid" id="Q59RA0"/>
<dbReference type="OrthoDB" id="20900at2759"/>
<dbReference type="PRO" id="PR:Q59RA0"/>
<dbReference type="Proteomes" id="UP000000559">
    <property type="component" value="Chromosome 4"/>
</dbReference>
<dbReference type="GO" id="GO:0005634">
    <property type="term" value="C:nucleus"/>
    <property type="evidence" value="ECO:0000318"/>
    <property type="project" value="GO_Central"/>
</dbReference>
<dbReference type="GO" id="GO:0006364">
    <property type="term" value="P:rRNA processing"/>
    <property type="evidence" value="ECO:0000318"/>
    <property type="project" value="GO_Central"/>
</dbReference>
<dbReference type="InterPro" id="IPR012583">
    <property type="entry name" value="RIX1_N"/>
</dbReference>
<dbReference type="PANTHER" id="PTHR34105">
    <property type="entry name" value="PROLINE-, GLUTAMIC ACID- AND LEUCINE-RICH PROTEIN 1"/>
    <property type="match status" value="1"/>
</dbReference>
<dbReference type="PANTHER" id="PTHR34105:SF1">
    <property type="entry name" value="PROLINE-, GLUTAMIC ACID- AND LEUCINE-RICH PROTEIN 1"/>
    <property type="match status" value="1"/>
</dbReference>
<dbReference type="Pfam" id="PF08167">
    <property type="entry name" value="RIX1"/>
    <property type="match status" value="1"/>
</dbReference>
<sequence>MSINIVLEEIKGTPSSIIPLLSILHNDKQILSTITKTELNHLISRTLNLVRSSDVYNKWCGINLIRVIVEEYSILASEGNNLMNSLLQVLEAYQQQQHHHHHQTTIDLKILTSCIETINYMGDLIRGKPTLTREILTPKLNSIIGYYFQYLHFAPLLILNSLQTLLKFHPTTFRPFGNKLKTKLINLIDGGGGEEFINYPQDLQLSIYNTLAMLPIIEKIEPETKWYNDVINILGEINGLIQIYQEFLNFKDDQDLSNLIQKLPNRPTTTTTTTKLLTDLSIDFNKPQTILSISNHLNILMGVLKSYLTVETLFTVKLPLGLILTTCELICSINTKFLSFKGDIRDETIKKLIKFSLIENYKTTLGVLIELIELYKGSLIPHLTTIWSFLETLIPFQNQNKRIVNEEIIESESLYVEILQFMKQSLSLLGNVSENTQLLRFVDMALILVEPRINPTTTTTTTNNNNNNNNTKQTNVQQGKKQKKRKNTSSVALSDILSHEHLFMTNIPTITITTVRSFINQIITKIILPPTQHYKIMRYLIIESIHAKYYNLYHNVPIELKKLLINAVLYPGYDKISILPIISTILSDDPLLGVFNNPKFPPLPKYINLVNNIEEEEQKEEQEEDAIIEDEVEEPIKEELTTPLKKRKLDIESNEETDNNNIIPVEDQSKIFTATKVEKLTTTTTSSIENNPVVIEELTSSKEIVVESPVDEPTKVDNIIPTTTTTTTTTTSLTSNTANANDDNDNDDDDESSDFEMPEINLDQDSDDE</sequence>
<name>RIX1_CANAL</name>
<reference key="1">
    <citation type="journal article" date="2004" name="Proc. Natl. Acad. Sci. U.S.A.">
        <title>The diploid genome sequence of Candida albicans.</title>
        <authorList>
            <person name="Jones T."/>
            <person name="Federspiel N.A."/>
            <person name="Chibana H."/>
            <person name="Dungan J."/>
            <person name="Kalman S."/>
            <person name="Magee B.B."/>
            <person name="Newport G."/>
            <person name="Thorstenson Y.R."/>
            <person name="Agabian N."/>
            <person name="Magee P.T."/>
            <person name="Davis R.W."/>
            <person name="Scherer S."/>
        </authorList>
    </citation>
    <scope>NUCLEOTIDE SEQUENCE [LARGE SCALE GENOMIC DNA]</scope>
    <source>
        <strain>SC5314 / ATCC MYA-2876</strain>
    </source>
</reference>
<reference key="2">
    <citation type="journal article" date="2007" name="Genome Biol.">
        <title>Assembly of the Candida albicans genome into sixteen supercontigs aligned on the eight chromosomes.</title>
        <authorList>
            <person name="van het Hoog M."/>
            <person name="Rast T.J."/>
            <person name="Martchenko M."/>
            <person name="Grindle S."/>
            <person name="Dignard D."/>
            <person name="Hogues H."/>
            <person name="Cuomo C."/>
            <person name="Berriman M."/>
            <person name="Scherer S."/>
            <person name="Magee B.B."/>
            <person name="Whiteway M."/>
            <person name="Chibana H."/>
            <person name="Nantel A."/>
            <person name="Magee P.T."/>
        </authorList>
    </citation>
    <scope>GENOME REANNOTATION</scope>
    <source>
        <strain>SC5314 / ATCC MYA-2876</strain>
    </source>
</reference>
<reference key="3">
    <citation type="journal article" date="2013" name="Genome Biol.">
        <title>Assembly of a phased diploid Candida albicans genome facilitates allele-specific measurements and provides a simple model for repeat and indel structure.</title>
        <authorList>
            <person name="Muzzey D."/>
            <person name="Schwartz K."/>
            <person name="Weissman J.S."/>
            <person name="Sherlock G."/>
        </authorList>
    </citation>
    <scope>NUCLEOTIDE SEQUENCE [LARGE SCALE GENOMIC DNA]</scope>
    <scope>GENOME REANNOTATION</scope>
    <source>
        <strain>SC5314 / ATCC MYA-2876</strain>
    </source>
</reference>
<organism>
    <name type="scientific">Candida albicans (strain SC5314 / ATCC MYA-2876)</name>
    <name type="common">Yeast</name>
    <dbReference type="NCBI Taxonomy" id="237561"/>
    <lineage>
        <taxon>Eukaryota</taxon>
        <taxon>Fungi</taxon>
        <taxon>Dikarya</taxon>
        <taxon>Ascomycota</taxon>
        <taxon>Saccharomycotina</taxon>
        <taxon>Pichiomycetes</taxon>
        <taxon>Debaryomycetaceae</taxon>
        <taxon>Candida/Lodderomyces clade</taxon>
        <taxon>Candida</taxon>
    </lineage>
</organism>
<protein>
    <recommendedName>
        <fullName>Pre-rRNA-processing protein RIX1</fullName>
    </recommendedName>
</protein>
<keyword id="KW-0539">Nucleus</keyword>
<keyword id="KW-1185">Reference proteome</keyword>
<keyword id="KW-0690">Ribosome biogenesis</keyword>
<keyword id="KW-0698">rRNA processing</keyword>
<feature type="chain" id="PRO_0000308915" description="Pre-rRNA-processing protein RIX1">
    <location>
        <begin position="1"/>
        <end position="769"/>
    </location>
</feature>
<feature type="region of interest" description="Disordered" evidence="2">
    <location>
        <begin position="456"/>
        <end position="488"/>
    </location>
</feature>
<feature type="region of interest" description="Disordered" evidence="2">
    <location>
        <begin position="715"/>
        <end position="769"/>
    </location>
</feature>
<feature type="compositionally biased region" description="Low complexity" evidence="2">
    <location>
        <begin position="456"/>
        <end position="479"/>
    </location>
</feature>
<feature type="compositionally biased region" description="Low complexity" evidence="2">
    <location>
        <begin position="722"/>
        <end position="741"/>
    </location>
</feature>
<feature type="compositionally biased region" description="Acidic residues" evidence="2">
    <location>
        <begin position="742"/>
        <end position="769"/>
    </location>
</feature>
<accession>Q59RA0</accession>
<accession>A0A1D8PM99</accession>
<comment type="function">
    <text evidence="1">Component of the RIX1 complex required for processing of ITS2 sequences from 35S pre-rRNA and the nucleoplasmic transit of the pre-60S ribosomal subunits. Regulates pre-60S association of the critical remodeling factor MDN1.</text>
</comment>
<comment type="subunit">
    <text evidence="1">Component of the RIX1 complex, composed of IPI1, RIX1/IPI2 and IPI3 in a 1:2:2 stoichiometry. The complex interacts (via RIX1) with MDN1 (via its hexameric AAA ATPase ring) and the pre-60S ribosome particles.</text>
</comment>
<comment type="subcellular location">
    <subcellularLocation>
        <location evidence="1">Nucleus</location>
    </subcellularLocation>
</comment>
<comment type="similarity">
    <text evidence="3">Belongs to the RIX1/PELP1 family.</text>
</comment>
<evidence type="ECO:0000250" key="1">
    <source>
        <dbReference type="UniProtKB" id="P38883"/>
    </source>
</evidence>
<evidence type="ECO:0000256" key="2">
    <source>
        <dbReference type="SAM" id="MobiDB-lite"/>
    </source>
</evidence>
<evidence type="ECO:0000305" key="3"/>